<protein>
    <recommendedName>
        <fullName>Competence protein F</fullName>
    </recommendedName>
    <alternativeName>
        <fullName>DNA transformation protein ComF</fullName>
    </alternativeName>
    <alternativeName>
        <fullName>Protein COM101A</fullName>
    </alternativeName>
</protein>
<proteinExistence type="inferred from homology"/>
<keyword id="KW-0178">Competence</keyword>
<keyword id="KW-1185">Reference proteome</keyword>
<organism>
    <name type="scientific">Haemophilus influenzae (strain ATCC 51907 / DSM 11121 / KW20 / Rd)</name>
    <dbReference type="NCBI Taxonomy" id="71421"/>
    <lineage>
        <taxon>Bacteria</taxon>
        <taxon>Pseudomonadati</taxon>
        <taxon>Pseudomonadota</taxon>
        <taxon>Gammaproteobacteria</taxon>
        <taxon>Pasteurellales</taxon>
        <taxon>Pasteurellaceae</taxon>
        <taxon>Haemophilus</taxon>
    </lineage>
</organism>
<dbReference type="EMBL" id="M62809">
    <property type="protein sequence ID" value="AAA25014.1"/>
    <property type="molecule type" value="Genomic_DNA"/>
</dbReference>
<dbReference type="EMBL" id="M59751">
    <property type="protein sequence ID" value="AAA24949.1"/>
    <property type="molecule type" value="Genomic_DNA"/>
</dbReference>
<dbReference type="EMBL" id="L42023">
    <property type="protein sequence ID" value="AAC22093.1"/>
    <property type="molecule type" value="Genomic_DNA"/>
</dbReference>
<dbReference type="PIR" id="JH0435">
    <property type="entry name" value="JH0435"/>
</dbReference>
<dbReference type="RefSeq" id="NP_438595.1">
    <property type="nucleotide sequence ID" value="NC_000907.1"/>
</dbReference>
<dbReference type="STRING" id="71421.HI_0434"/>
<dbReference type="EnsemblBacteria" id="AAC22093">
    <property type="protein sequence ID" value="AAC22093"/>
    <property type="gene ID" value="HI_0434"/>
</dbReference>
<dbReference type="KEGG" id="hin:HI_0434"/>
<dbReference type="PATRIC" id="fig|71421.8.peg.454"/>
<dbReference type="eggNOG" id="COG1040">
    <property type="taxonomic scope" value="Bacteria"/>
</dbReference>
<dbReference type="HOGENOM" id="CLU_054549_0_2_6"/>
<dbReference type="OrthoDB" id="9793412at2"/>
<dbReference type="PhylomeDB" id="P31773"/>
<dbReference type="BioCyc" id="HINF71421:G1GJ1-449-MONOMER"/>
<dbReference type="Proteomes" id="UP000000579">
    <property type="component" value="Chromosome"/>
</dbReference>
<dbReference type="GO" id="GO:0030420">
    <property type="term" value="P:establishment of competence for transformation"/>
    <property type="evidence" value="ECO:0007669"/>
    <property type="project" value="UniProtKB-KW"/>
</dbReference>
<dbReference type="CDD" id="cd06223">
    <property type="entry name" value="PRTases_typeI"/>
    <property type="match status" value="1"/>
</dbReference>
<dbReference type="Gene3D" id="3.40.50.2020">
    <property type="match status" value="1"/>
</dbReference>
<dbReference type="InterPro" id="IPR051910">
    <property type="entry name" value="ComF/GntX_DNA_util-trans"/>
</dbReference>
<dbReference type="InterPro" id="IPR005222">
    <property type="entry name" value="Competence_ComF"/>
</dbReference>
<dbReference type="InterPro" id="IPR000836">
    <property type="entry name" value="PRibTrfase_dom"/>
</dbReference>
<dbReference type="InterPro" id="IPR029057">
    <property type="entry name" value="PRTase-like"/>
</dbReference>
<dbReference type="NCBIfam" id="TIGR00201">
    <property type="entry name" value="comF"/>
    <property type="match status" value="1"/>
</dbReference>
<dbReference type="PANTHER" id="PTHR47505">
    <property type="entry name" value="DNA UTILIZATION PROTEIN YHGH"/>
    <property type="match status" value="1"/>
</dbReference>
<dbReference type="PANTHER" id="PTHR47505:SF1">
    <property type="entry name" value="DNA UTILIZATION PROTEIN YHGH"/>
    <property type="match status" value="1"/>
</dbReference>
<dbReference type="Pfam" id="PF00156">
    <property type="entry name" value="Pribosyltran"/>
    <property type="match status" value="1"/>
</dbReference>
<dbReference type="SUPFAM" id="SSF53271">
    <property type="entry name" value="PRTase-like"/>
    <property type="match status" value="1"/>
</dbReference>
<feature type="chain" id="PRO_0000209456" description="Competence protein F">
    <location>
        <begin position="1"/>
        <end position="229"/>
    </location>
</feature>
<reference key="1">
    <citation type="journal article" date="1991" name="Gene">
        <title>Nucleotide sequence of a cluster of genes involved in the transformation of Haemophilus influenzae Rd.</title>
        <authorList>
            <person name="Tomb J.-F."/>
            <person name="El-Hajj H."/>
            <person name="Smith H.O."/>
        </authorList>
    </citation>
    <scope>NUCLEOTIDE SEQUENCE [GENOMIC DNA]</scope>
    <source>
        <strain>ATCC 51907 / DSM 11121 / KW20 / Rd</strain>
    </source>
</reference>
<reference key="2">
    <citation type="journal article" date="1991" name="J. Bacteriol.">
        <title>Sequence and transcriptional regulation of com101A, a locus required for genetic transformation in Haemophilus influenzae.</title>
        <authorList>
            <person name="Larson T.G."/>
            <person name="Goodgal S.H."/>
        </authorList>
    </citation>
    <scope>NUCLEOTIDE SEQUENCE [GENOMIC DNA]</scope>
</reference>
<reference key="3">
    <citation type="journal article" date="1995" name="Science">
        <title>Whole-genome random sequencing and assembly of Haemophilus influenzae Rd.</title>
        <authorList>
            <person name="Fleischmann R.D."/>
            <person name="Adams M.D."/>
            <person name="White O."/>
            <person name="Clayton R.A."/>
            <person name="Kirkness E.F."/>
            <person name="Kerlavage A.R."/>
            <person name="Bult C.J."/>
            <person name="Tomb J.-F."/>
            <person name="Dougherty B.A."/>
            <person name="Merrick J.M."/>
            <person name="McKenney K."/>
            <person name="Sutton G.G."/>
            <person name="FitzHugh W."/>
            <person name="Fields C.A."/>
            <person name="Gocayne J.D."/>
            <person name="Scott J.D."/>
            <person name="Shirley R."/>
            <person name="Liu L.-I."/>
            <person name="Glodek A."/>
            <person name="Kelley J.M."/>
            <person name="Weidman J.F."/>
            <person name="Phillips C.A."/>
            <person name="Spriggs T."/>
            <person name="Hedblom E."/>
            <person name="Cotton M.D."/>
            <person name="Utterback T.R."/>
            <person name="Hanna M.C."/>
            <person name="Nguyen D.T."/>
            <person name="Saudek D.M."/>
            <person name="Brandon R.C."/>
            <person name="Fine L.D."/>
            <person name="Fritchman J.L."/>
            <person name="Fuhrmann J.L."/>
            <person name="Geoghagen N.S.M."/>
            <person name="Gnehm C.L."/>
            <person name="McDonald L.A."/>
            <person name="Small K.V."/>
            <person name="Fraser C.M."/>
            <person name="Smith H.O."/>
            <person name="Venter J.C."/>
        </authorList>
    </citation>
    <scope>NUCLEOTIDE SEQUENCE [LARGE SCALE GENOMIC DNA]</scope>
    <source>
        <strain>ATCC 51907 / DSM 11121 / KW20 / Rd</strain>
    </source>
</reference>
<evidence type="ECO:0000305" key="1"/>
<accession>P31773</accession>
<name>COMF_HAEIN</name>
<comment type="function">
    <text>Involved in transformation (genetic competence for DNA uptake).</text>
</comment>
<comment type="similarity">
    <text evidence="1">Belongs to the ComF/GntX family.</text>
</comment>
<sequence>MMNFFNFRCIHCRGNLHIAKNGLCSGCQKQIKSFPYCGHCGSELQYYAQHCGNCLKQEPSWDKMVIIGHYIEPLSILIQRFKFQNQFWIDRTLARLLYLAVRDAKRTHQLKLPEAIIPVPLYHFRQWRRGYNQADLLSQQLSRWLDIPNLNNIVKRVKHTYTQRGLSAKDRRQNLKNAFSLAVSKNEFPYRRVALVDDVITTGSTLNEISKLLRKLGVEEIQVWGLARA</sequence>
<gene>
    <name type="primary">comF</name>
    <name type="ordered locus">HI_0434</name>
</gene>